<accession>Q28021</accession>
<comment type="function">
    <text evidence="14 15 16 18 19 20 21">Protein kinase which is a key regulator of actin cytoskeleton and cell polarity. Involved in regulation of smooth muscle contraction, actin cytoskeleton organization, stress fiber and focal adhesion formation, neurite retraction, cell adhesion and motility via phosphorylation of ADD1, BRCA2, CNN1, EZR, DPYSL2, EP300, MSN, MYL9/MLC2, NPM1, RDX, PPP1R12A and VIM. Phosphorylates SORL1 and IRF4. Acts as a negative regulator of VEGF-induced angiogenic endothelial cell activation. Positively regulates the activation of p42/MAPK1-p44/MAPK3 and of p90RSK/RPS6KA1 during myogenic differentiation. Plays an important role in the timely initiation of centrosome duplication. Inhibits keratinocyte terminal differentiation. May regulate closure of the eyelids and ventral body wall through organization of actomyosin bundles. Plays a critical role in the regulation of spine and synaptic properties in the hippocampus. Plays an important role in generating the circadian rhythm of the aortic myofilament Ca(2+) sensitivity and vascular contractility by modulating the myosin light chain phosphorylation.</text>
</comment>
<comment type="catalytic activity">
    <reaction>
        <text>L-seryl-[protein] + ATP = O-phospho-L-seryl-[protein] + ADP + H(+)</text>
        <dbReference type="Rhea" id="RHEA:17989"/>
        <dbReference type="Rhea" id="RHEA-COMP:9863"/>
        <dbReference type="Rhea" id="RHEA-COMP:11604"/>
        <dbReference type="ChEBI" id="CHEBI:15378"/>
        <dbReference type="ChEBI" id="CHEBI:29999"/>
        <dbReference type="ChEBI" id="CHEBI:30616"/>
        <dbReference type="ChEBI" id="CHEBI:83421"/>
        <dbReference type="ChEBI" id="CHEBI:456216"/>
        <dbReference type="EC" id="2.7.11.1"/>
    </reaction>
</comment>
<comment type="catalytic activity">
    <reaction>
        <text>L-threonyl-[protein] + ATP = O-phospho-L-threonyl-[protein] + ADP + H(+)</text>
        <dbReference type="Rhea" id="RHEA:46608"/>
        <dbReference type="Rhea" id="RHEA-COMP:11060"/>
        <dbReference type="Rhea" id="RHEA-COMP:11605"/>
        <dbReference type="ChEBI" id="CHEBI:15378"/>
        <dbReference type="ChEBI" id="CHEBI:30013"/>
        <dbReference type="ChEBI" id="CHEBI:30616"/>
        <dbReference type="ChEBI" id="CHEBI:61977"/>
        <dbReference type="ChEBI" id="CHEBI:456216"/>
        <dbReference type="EC" id="2.7.11.1"/>
    </reaction>
</comment>
<comment type="cofactor">
    <cofactor evidence="1">
        <name>Mg(2+)</name>
        <dbReference type="ChEBI" id="CHEBI:18420"/>
    </cofactor>
</comment>
<comment type="activity regulation">
    <text>Activated by RHOA binding. Inhibited by Y-27632.</text>
</comment>
<comment type="subunit">
    <text evidence="2 3 4 17">Homodimer (PubMed:12954645). Interacts with IRS1 (By similarity). Interacts with RAF1 (By similarity). Interacts with RHOA (activated by GTP) (PubMed:12954645). Interacts with RHOB and RHOC (By similarity). Interacts with PPP1R12A (By similarity). Interacts with EP300 (By similarity). Interacts with CHORDC1 (By similarity). Interacts with BRCA2 (By similarity). Interacts with NPM1; this interaction enhances ROCK2 activity (By similarity). Interacts with SORL1 (By similarity). Interacts with PJVK (By similarity).</text>
</comment>
<comment type="subcellular location">
    <subcellularLocation>
        <location evidence="18">Cytoplasm</location>
    </subcellularLocation>
    <subcellularLocation>
        <location evidence="18">Cell membrane</location>
        <topology evidence="18">Peripheral membrane protein</topology>
    </subcellularLocation>
    <subcellularLocation>
        <location evidence="1">Nucleus</location>
    </subcellularLocation>
    <subcellularLocation>
        <location evidence="1">Cytoplasm</location>
        <location evidence="1">Cytoskeleton</location>
        <location evidence="1">Microtubule organizing center</location>
        <location evidence="1">Centrosome</location>
    </subcellularLocation>
    <text>Cytoplasmic, and associated with actin microfilaments and the plasma membrane.</text>
</comment>
<comment type="tissue specificity">
    <text evidence="18">Highly expressed in whole brain and in cerebellum, and at lower levels in heart and lung. Detected at low levels in skeletal muscle, spleen, liver, kidney and pancreas.</text>
</comment>
<comment type="domain">
    <text evidence="1">An interaction between Thr-414 and Asp-48 is essential for kinase activity and dimerization.</text>
</comment>
<comment type="PTM">
    <text evidence="1">Autophosphorylated. Phosphorylation at Tyr-722 reduces its binding to RHOA and is crucial for focal adhesion dynamics. Dephosphorylation by PTPN11 stimulates its RHOA binding activity (By similarity).</text>
</comment>
<comment type="PTM">
    <text evidence="1">Cleaved by granzyme B during apoptosis. This leads to constitutive activation of the kinase and membrane blebbing (By similarity).</text>
</comment>
<comment type="similarity">
    <text evidence="22">Belongs to the protein kinase superfamily. AGC Ser/Thr protein kinase family.</text>
</comment>
<dbReference type="EC" id="2.7.11.1"/>
<dbReference type="EMBL" id="U36909">
    <property type="protein sequence ID" value="AAC48567.1"/>
    <property type="molecule type" value="mRNA"/>
</dbReference>
<dbReference type="PIR" id="S70633">
    <property type="entry name" value="S70633"/>
</dbReference>
<dbReference type="RefSeq" id="NP_776877.1">
    <property type="nucleotide sequence ID" value="NM_174452.2"/>
</dbReference>
<dbReference type="PDB" id="1UIX">
    <property type="method" value="X-ray"/>
    <property type="resolution" value="1.80 A"/>
    <property type="chains" value="A/B=979-1047"/>
</dbReference>
<dbReference type="PDB" id="2F2U">
    <property type="method" value="X-ray"/>
    <property type="resolution" value="2.40 A"/>
    <property type="chains" value="A/B=18-417"/>
</dbReference>
<dbReference type="PDB" id="2H9V">
    <property type="method" value="X-ray"/>
    <property type="resolution" value="3.10 A"/>
    <property type="chains" value="A=18-417"/>
</dbReference>
<dbReference type="PDBsum" id="1UIX"/>
<dbReference type="PDBsum" id="2F2U"/>
<dbReference type="PDBsum" id="2H9V"/>
<dbReference type="SMR" id="Q28021"/>
<dbReference type="DIP" id="DIP-29038N"/>
<dbReference type="FunCoup" id="Q28021">
    <property type="interactions" value="2420"/>
</dbReference>
<dbReference type="IntAct" id="Q28021">
    <property type="interactions" value="1"/>
</dbReference>
<dbReference type="MINT" id="Q28021"/>
<dbReference type="STRING" id="9913.ENSBTAP00000059586"/>
<dbReference type="BindingDB" id="Q28021"/>
<dbReference type="iPTMnet" id="Q28021"/>
<dbReference type="PaxDb" id="9913-ENSBTAP00000007691"/>
<dbReference type="GeneID" id="282041"/>
<dbReference type="KEGG" id="bta:282041"/>
<dbReference type="CTD" id="9475"/>
<dbReference type="eggNOG" id="KOG0612">
    <property type="taxonomic scope" value="Eukaryota"/>
</dbReference>
<dbReference type="InParanoid" id="Q28021"/>
<dbReference type="OrthoDB" id="3638488at2759"/>
<dbReference type="EvolutionaryTrace" id="Q28021"/>
<dbReference type="Proteomes" id="UP000009136">
    <property type="component" value="Unplaced"/>
</dbReference>
<dbReference type="GO" id="GO:0005813">
    <property type="term" value="C:centrosome"/>
    <property type="evidence" value="ECO:0000318"/>
    <property type="project" value="GO_Central"/>
</dbReference>
<dbReference type="GO" id="GO:0005737">
    <property type="term" value="C:cytoplasm"/>
    <property type="evidence" value="ECO:0000318"/>
    <property type="project" value="GO_Central"/>
</dbReference>
<dbReference type="GO" id="GO:0005856">
    <property type="term" value="C:cytoskeleton"/>
    <property type="evidence" value="ECO:0000318"/>
    <property type="project" value="GO_Central"/>
</dbReference>
<dbReference type="GO" id="GO:0005829">
    <property type="term" value="C:cytosol"/>
    <property type="evidence" value="ECO:0000304"/>
    <property type="project" value="Reactome"/>
</dbReference>
<dbReference type="GO" id="GO:0005634">
    <property type="term" value="C:nucleus"/>
    <property type="evidence" value="ECO:0007669"/>
    <property type="project" value="UniProtKB-SubCell"/>
</dbReference>
<dbReference type="GO" id="GO:0005886">
    <property type="term" value="C:plasma membrane"/>
    <property type="evidence" value="ECO:0007669"/>
    <property type="project" value="UniProtKB-SubCell"/>
</dbReference>
<dbReference type="GO" id="GO:0005524">
    <property type="term" value="F:ATP binding"/>
    <property type="evidence" value="ECO:0007669"/>
    <property type="project" value="UniProtKB-KW"/>
</dbReference>
<dbReference type="GO" id="GO:0004672">
    <property type="term" value="F:protein kinase activity"/>
    <property type="evidence" value="ECO:0000314"/>
    <property type="project" value="MGI"/>
</dbReference>
<dbReference type="GO" id="GO:0106310">
    <property type="term" value="F:protein serine kinase activity"/>
    <property type="evidence" value="ECO:0007669"/>
    <property type="project" value="RHEA"/>
</dbReference>
<dbReference type="GO" id="GO:0004674">
    <property type="term" value="F:protein serine/threonine kinase activity"/>
    <property type="evidence" value="ECO:0000304"/>
    <property type="project" value="Reactome"/>
</dbReference>
<dbReference type="GO" id="GO:0072518">
    <property type="term" value="F:Rho-dependent protein serine/threonine kinase activity"/>
    <property type="evidence" value="ECO:0000318"/>
    <property type="project" value="GO_Central"/>
</dbReference>
<dbReference type="GO" id="GO:0031267">
    <property type="term" value="F:small GTPase binding"/>
    <property type="evidence" value="ECO:0007669"/>
    <property type="project" value="InterPro"/>
</dbReference>
<dbReference type="GO" id="GO:0008270">
    <property type="term" value="F:zinc ion binding"/>
    <property type="evidence" value="ECO:0007669"/>
    <property type="project" value="UniProtKB-KW"/>
</dbReference>
<dbReference type="GO" id="GO:0030036">
    <property type="term" value="P:actin cytoskeleton organization"/>
    <property type="evidence" value="ECO:0000250"/>
    <property type="project" value="AgBase"/>
</dbReference>
<dbReference type="GO" id="GO:0031032">
    <property type="term" value="P:actomyosin structure organization"/>
    <property type="evidence" value="ECO:0000318"/>
    <property type="project" value="GO_Central"/>
</dbReference>
<dbReference type="GO" id="GO:0030866">
    <property type="term" value="P:cortical actin cytoskeleton organization"/>
    <property type="evidence" value="ECO:0000318"/>
    <property type="project" value="GO_Central"/>
</dbReference>
<dbReference type="GO" id="GO:0048598">
    <property type="term" value="P:embryonic morphogenesis"/>
    <property type="evidence" value="ECO:0000318"/>
    <property type="project" value="GO_Central"/>
</dbReference>
<dbReference type="GO" id="GO:0000281">
    <property type="term" value="P:mitotic cytokinesis"/>
    <property type="evidence" value="ECO:0000318"/>
    <property type="project" value="GO_Central"/>
</dbReference>
<dbReference type="GO" id="GO:0010825">
    <property type="term" value="P:positive regulation of centrosome duplication"/>
    <property type="evidence" value="ECO:0007669"/>
    <property type="project" value="InterPro"/>
</dbReference>
<dbReference type="GO" id="GO:0032956">
    <property type="term" value="P:regulation of actin cytoskeleton organization"/>
    <property type="evidence" value="ECO:0000318"/>
    <property type="project" value="GO_Central"/>
</dbReference>
<dbReference type="GO" id="GO:1901888">
    <property type="term" value="P:regulation of cell junction assembly"/>
    <property type="evidence" value="ECO:0000318"/>
    <property type="project" value="GO_Central"/>
</dbReference>
<dbReference type="GO" id="GO:0042752">
    <property type="term" value="P:regulation of circadian rhythm"/>
    <property type="evidence" value="ECO:0000250"/>
    <property type="project" value="UniProtKB"/>
</dbReference>
<dbReference type="GO" id="GO:0007266">
    <property type="term" value="P:Rho protein signal transduction"/>
    <property type="evidence" value="ECO:0000318"/>
    <property type="project" value="GO_Central"/>
</dbReference>
<dbReference type="GO" id="GO:0048511">
    <property type="term" value="P:rhythmic process"/>
    <property type="evidence" value="ECO:0007669"/>
    <property type="project" value="UniProtKB-KW"/>
</dbReference>
<dbReference type="GO" id="GO:0006939">
    <property type="term" value="P:smooth muscle contraction"/>
    <property type="evidence" value="ECO:0007669"/>
    <property type="project" value="InterPro"/>
</dbReference>
<dbReference type="CDD" id="cd20875">
    <property type="entry name" value="C1_ROCK2"/>
    <property type="match status" value="1"/>
</dbReference>
<dbReference type="CDD" id="cd11638">
    <property type="entry name" value="HR1_ROCK2"/>
    <property type="match status" value="1"/>
</dbReference>
<dbReference type="CDD" id="cd01242">
    <property type="entry name" value="PH_ROCK"/>
    <property type="match status" value="1"/>
</dbReference>
<dbReference type="CDD" id="cd22250">
    <property type="entry name" value="ROCK_SBD"/>
    <property type="match status" value="1"/>
</dbReference>
<dbReference type="CDD" id="cd05621">
    <property type="entry name" value="STKc_ROCK2"/>
    <property type="match status" value="1"/>
</dbReference>
<dbReference type="FunFam" id="1.10.510.10:FF:000047">
    <property type="entry name" value="Rho-associated protein kinase 1"/>
    <property type="match status" value="1"/>
</dbReference>
<dbReference type="FunFam" id="3.30.60.20:FF:000036">
    <property type="entry name" value="Rho-associated protein kinase 1"/>
    <property type="match status" value="1"/>
</dbReference>
<dbReference type="FunFam" id="1.20.5.340:FF:000016">
    <property type="entry name" value="Rho-associated protein kinase 2"/>
    <property type="match status" value="1"/>
</dbReference>
<dbReference type="FunFam" id="2.30.29.30:FF:000033">
    <property type="entry name" value="Rho-associated protein kinase 2"/>
    <property type="match status" value="1"/>
</dbReference>
<dbReference type="FunFam" id="3.30.200.20:FF:000072">
    <property type="entry name" value="Rho-associated protein kinase 2"/>
    <property type="match status" value="1"/>
</dbReference>
<dbReference type="FunFam" id="1.20.5.730:FF:000001">
    <property type="entry name" value="rho-associated protein kinase 2"/>
    <property type="match status" value="1"/>
</dbReference>
<dbReference type="FunFam" id="3.30.200.20:FF:001759">
    <property type="entry name" value="Rho-associated, coiled-coil-containing protein kinase 2b"/>
    <property type="match status" value="1"/>
</dbReference>
<dbReference type="Gene3D" id="1.20.5.340">
    <property type="match status" value="1"/>
</dbReference>
<dbReference type="Gene3D" id="3.30.60.20">
    <property type="match status" value="1"/>
</dbReference>
<dbReference type="Gene3D" id="3.30.200.20">
    <property type="entry name" value="Phosphorylase Kinase, domain 1"/>
    <property type="match status" value="1"/>
</dbReference>
<dbReference type="Gene3D" id="2.30.29.30">
    <property type="entry name" value="Pleckstrin-homology domain (PH domain)/Phosphotyrosine-binding domain (PTB)"/>
    <property type="match status" value="1"/>
</dbReference>
<dbReference type="Gene3D" id="1.20.5.730">
    <property type="entry name" value="Single helix bin"/>
    <property type="match status" value="1"/>
</dbReference>
<dbReference type="Gene3D" id="1.10.510.10">
    <property type="entry name" value="Transferase(Phosphotransferase) domain 1"/>
    <property type="match status" value="1"/>
</dbReference>
<dbReference type="InterPro" id="IPR000961">
    <property type="entry name" value="AGC-kinase_C"/>
</dbReference>
<dbReference type="InterPro" id="IPR046349">
    <property type="entry name" value="C1-like_sf"/>
</dbReference>
<dbReference type="InterPro" id="IPR011072">
    <property type="entry name" value="HR1_rho-bd"/>
</dbReference>
<dbReference type="InterPro" id="IPR011009">
    <property type="entry name" value="Kinase-like_dom_sf"/>
</dbReference>
<dbReference type="InterPro" id="IPR002219">
    <property type="entry name" value="PE/DAG-bd"/>
</dbReference>
<dbReference type="InterPro" id="IPR011993">
    <property type="entry name" value="PH-like_dom_sf"/>
</dbReference>
<dbReference type="InterPro" id="IPR001849">
    <property type="entry name" value="PH_domain"/>
</dbReference>
<dbReference type="InterPro" id="IPR000719">
    <property type="entry name" value="Prot_kinase_dom"/>
</dbReference>
<dbReference type="InterPro" id="IPR017441">
    <property type="entry name" value="Protein_kinase_ATP_BS"/>
</dbReference>
<dbReference type="InterPro" id="IPR050839">
    <property type="entry name" value="Rho-assoc_Ser/Thr_Kinase"/>
</dbReference>
<dbReference type="InterPro" id="IPR020684">
    <property type="entry name" value="ROCK1/ROCK2"/>
</dbReference>
<dbReference type="InterPro" id="IPR029878">
    <property type="entry name" value="ROCK2_cat"/>
</dbReference>
<dbReference type="InterPro" id="IPR037311">
    <property type="entry name" value="ROCK2_HR1"/>
</dbReference>
<dbReference type="InterPro" id="IPR015008">
    <property type="entry name" value="ROCK_Rho-bd_dom"/>
</dbReference>
<dbReference type="InterPro" id="IPR008271">
    <property type="entry name" value="Ser/Thr_kinase_AS"/>
</dbReference>
<dbReference type="PANTHER" id="PTHR22988">
    <property type="entry name" value="MYOTONIC DYSTROPHY S/T KINASE-RELATED"/>
    <property type="match status" value="1"/>
</dbReference>
<dbReference type="PANTHER" id="PTHR22988:SF28">
    <property type="entry name" value="RHO-ASSOCIATED PROTEIN KINASE 2"/>
    <property type="match status" value="1"/>
</dbReference>
<dbReference type="Pfam" id="PF25346">
    <property type="entry name" value="PH_MRCK"/>
    <property type="match status" value="1"/>
</dbReference>
<dbReference type="Pfam" id="PF00069">
    <property type="entry name" value="Pkinase"/>
    <property type="match status" value="1"/>
</dbReference>
<dbReference type="Pfam" id="PF08912">
    <property type="entry name" value="Rho_Binding"/>
    <property type="match status" value="1"/>
</dbReference>
<dbReference type="PIRSF" id="PIRSF037568">
    <property type="entry name" value="Rho_kinase"/>
    <property type="match status" value="1"/>
</dbReference>
<dbReference type="SMART" id="SM00109">
    <property type="entry name" value="C1"/>
    <property type="match status" value="1"/>
</dbReference>
<dbReference type="SMART" id="SM00233">
    <property type="entry name" value="PH"/>
    <property type="match status" value="1"/>
</dbReference>
<dbReference type="SMART" id="SM00133">
    <property type="entry name" value="S_TK_X"/>
    <property type="match status" value="1"/>
</dbReference>
<dbReference type="SMART" id="SM00220">
    <property type="entry name" value="S_TKc"/>
    <property type="match status" value="1"/>
</dbReference>
<dbReference type="SUPFAM" id="SSF57889">
    <property type="entry name" value="Cysteine-rich domain"/>
    <property type="match status" value="1"/>
</dbReference>
<dbReference type="SUPFAM" id="SSF103652">
    <property type="entry name" value="G protein-binding domain"/>
    <property type="match status" value="1"/>
</dbReference>
<dbReference type="SUPFAM" id="SSF50729">
    <property type="entry name" value="PH domain-like"/>
    <property type="match status" value="1"/>
</dbReference>
<dbReference type="SUPFAM" id="SSF56112">
    <property type="entry name" value="Protein kinase-like (PK-like)"/>
    <property type="match status" value="1"/>
</dbReference>
<dbReference type="PROSITE" id="PS51285">
    <property type="entry name" value="AGC_KINASE_CTER"/>
    <property type="match status" value="1"/>
</dbReference>
<dbReference type="PROSITE" id="PS50003">
    <property type="entry name" value="PH_DOMAIN"/>
    <property type="match status" value="1"/>
</dbReference>
<dbReference type="PROSITE" id="PS00107">
    <property type="entry name" value="PROTEIN_KINASE_ATP"/>
    <property type="match status" value="1"/>
</dbReference>
<dbReference type="PROSITE" id="PS50011">
    <property type="entry name" value="PROTEIN_KINASE_DOM"/>
    <property type="match status" value="1"/>
</dbReference>
<dbReference type="PROSITE" id="PS00108">
    <property type="entry name" value="PROTEIN_KINASE_ST"/>
    <property type="match status" value="1"/>
</dbReference>
<dbReference type="PROSITE" id="PS51860">
    <property type="entry name" value="REM_1"/>
    <property type="match status" value="1"/>
</dbReference>
<dbReference type="PROSITE" id="PS51859">
    <property type="entry name" value="RHO_BD"/>
    <property type="match status" value="1"/>
</dbReference>
<dbReference type="PROSITE" id="PS50081">
    <property type="entry name" value="ZF_DAG_PE_2"/>
    <property type="match status" value="1"/>
</dbReference>
<organism>
    <name type="scientific">Bos taurus</name>
    <name type="common">Bovine</name>
    <dbReference type="NCBI Taxonomy" id="9913"/>
    <lineage>
        <taxon>Eukaryota</taxon>
        <taxon>Metazoa</taxon>
        <taxon>Chordata</taxon>
        <taxon>Craniata</taxon>
        <taxon>Vertebrata</taxon>
        <taxon>Euteleostomi</taxon>
        <taxon>Mammalia</taxon>
        <taxon>Eutheria</taxon>
        <taxon>Laurasiatheria</taxon>
        <taxon>Artiodactyla</taxon>
        <taxon>Ruminantia</taxon>
        <taxon>Pecora</taxon>
        <taxon>Bovidae</taxon>
        <taxon>Bovinae</taxon>
        <taxon>Bos</taxon>
    </lineage>
</organism>
<protein>
    <recommendedName>
        <fullName>Rho-associated protein kinase 2</fullName>
        <ecNumber>2.7.11.1</ecNumber>
    </recommendedName>
    <alternativeName>
        <fullName>Rho-associated, coiled-coil-containing protein kinase 2</fullName>
    </alternativeName>
    <alternativeName>
        <fullName>Rho-associated, coiled-coil-containing protein kinase II</fullName>
        <shortName>ROCK-II</shortName>
    </alternativeName>
    <alternativeName>
        <fullName>p164 ROCK-2</fullName>
    </alternativeName>
</protein>
<name>ROCK2_BOVIN</name>
<evidence type="ECO:0000250" key="1"/>
<evidence type="ECO:0000250" key="2">
    <source>
        <dbReference type="UniProtKB" id="O75116"/>
    </source>
</evidence>
<evidence type="ECO:0000250" key="3">
    <source>
        <dbReference type="UniProtKB" id="P70336"/>
    </source>
</evidence>
<evidence type="ECO:0000250" key="4">
    <source>
        <dbReference type="UniProtKB" id="Q62868"/>
    </source>
</evidence>
<evidence type="ECO:0000255" key="5"/>
<evidence type="ECO:0000255" key="6">
    <source>
        <dbReference type="PROSITE-ProRule" id="PRU00145"/>
    </source>
</evidence>
<evidence type="ECO:0000255" key="7">
    <source>
        <dbReference type="PROSITE-ProRule" id="PRU00159"/>
    </source>
</evidence>
<evidence type="ECO:0000255" key="8">
    <source>
        <dbReference type="PROSITE-ProRule" id="PRU00226"/>
    </source>
</evidence>
<evidence type="ECO:0000255" key="9">
    <source>
        <dbReference type="PROSITE-ProRule" id="PRU00618"/>
    </source>
</evidence>
<evidence type="ECO:0000255" key="10">
    <source>
        <dbReference type="PROSITE-ProRule" id="PRU01206"/>
    </source>
</evidence>
<evidence type="ECO:0000255" key="11">
    <source>
        <dbReference type="PROSITE-ProRule" id="PRU01207"/>
    </source>
</evidence>
<evidence type="ECO:0000255" key="12">
    <source>
        <dbReference type="PROSITE-ProRule" id="PRU10027"/>
    </source>
</evidence>
<evidence type="ECO:0000256" key="13">
    <source>
        <dbReference type="SAM" id="MobiDB-lite"/>
    </source>
</evidence>
<evidence type="ECO:0000269" key="14">
    <source>
    </source>
</evidence>
<evidence type="ECO:0000269" key="15">
    <source>
    </source>
</evidence>
<evidence type="ECO:0000269" key="16">
    <source>
    </source>
</evidence>
<evidence type="ECO:0000269" key="17">
    <source>
    </source>
</evidence>
<evidence type="ECO:0000269" key="18">
    <source>
    </source>
</evidence>
<evidence type="ECO:0000269" key="19">
    <source>
    </source>
</evidence>
<evidence type="ECO:0000269" key="20">
    <source>
    </source>
</evidence>
<evidence type="ECO:0000269" key="21">
    <source>
    </source>
</evidence>
<evidence type="ECO:0000305" key="22"/>
<evidence type="ECO:0007829" key="23">
    <source>
        <dbReference type="PDB" id="1UIX"/>
    </source>
</evidence>
<evidence type="ECO:0007829" key="24">
    <source>
        <dbReference type="PDB" id="2F2U"/>
    </source>
</evidence>
<feature type="chain" id="PRO_0000086624" description="Rho-associated protein kinase 2">
    <location>
        <begin position="1"/>
        <end position="1388"/>
    </location>
</feature>
<feature type="domain" description="Protein kinase" evidence="7">
    <location>
        <begin position="92"/>
        <end position="354"/>
    </location>
</feature>
<feature type="domain" description="AGC-kinase C-terminal" evidence="9">
    <location>
        <begin position="357"/>
        <end position="425"/>
    </location>
</feature>
<feature type="domain" description="REM-1" evidence="11">
    <location>
        <begin position="497"/>
        <end position="573"/>
    </location>
</feature>
<feature type="domain" description="RhoBD" evidence="10">
    <location>
        <begin position="979"/>
        <end position="1047"/>
    </location>
</feature>
<feature type="domain" description="PH" evidence="6">
    <location>
        <begin position="1150"/>
        <end position="1349"/>
    </location>
</feature>
<feature type="zinc finger region" description="Phorbol-ester/DAG-type" evidence="8">
    <location>
        <begin position="1260"/>
        <end position="1315"/>
    </location>
</feature>
<feature type="region of interest" description="Disordered" evidence="13">
    <location>
        <begin position="1"/>
        <end position="24"/>
    </location>
</feature>
<feature type="region of interest" description="Interaction with PPP1R12A" evidence="1">
    <location>
        <begin position="363"/>
        <end position="784"/>
    </location>
</feature>
<feature type="region of interest" description="Interaction with NPM1" evidence="1">
    <location>
        <begin position="373"/>
        <end position="420"/>
    </location>
</feature>
<feature type="region of interest" description="Disordered" evidence="13">
    <location>
        <begin position="512"/>
        <end position="532"/>
    </location>
</feature>
<feature type="region of interest" description="RHOA binding">
    <location>
        <begin position="979"/>
        <end position="1047"/>
    </location>
</feature>
<feature type="region of interest" description="Disordered" evidence="13">
    <location>
        <begin position="1345"/>
        <end position="1388"/>
    </location>
</feature>
<feature type="coiled-coil region" evidence="5">
    <location>
        <begin position="439"/>
        <end position="1025"/>
    </location>
</feature>
<feature type="coiled-coil region" evidence="5">
    <location>
        <begin position="1053"/>
        <end position="1131"/>
    </location>
</feature>
<feature type="compositionally biased region" description="Basic and acidic residues" evidence="13">
    <location>
        <begin position="512"/>
        <end position="530"/>
    </location>
</feature>
<feature type="compositionally biased region" description="Polar residues" evidence="13">
    <location>
        <begin position="1362"/>
        <end position="1376"/>
    </location>
</feature>
<feature type="active site" description="Proton acceptor" evidence="7 12">
    <location>
        <position position="214"/>
    </location>
</feature>
<feature type="binding site" evidence="7">
    <location>
        <begin position="98"/>
        <end position="106"/>
    </location>
    <ligand>
        <name>ATP</name>
        <dbReference type="ChEBI" id="CHEBI:30616"/>
    </ligand>
</feature>
<feature type="binding site" evidence="7">
    <location>
        <position position="121"/>
    </location>
    <ligand>
        <name>ATP</name>
        <dbReference type="ChEBI" id="CHEBI:30616"/>
    </ligand>
</feature>
<feature type="site" description="Cleavage; by granzyme B" evidence="1">
    <location>
        <begin position="1131"/>
        <end position="1132"/>
    </location>
</feature>
<feature type="modified residue" description="Phosphothreonine; by ROCK2" evidence="4">
    <location>
        <position position="414"/>
    </location>
</feature>
<feature type="modified residue" description="Phosphotyrosine; by SRC" evidence="2">
    <location>
        <position position="722"/>
    </location>
</feature>
<feature type="modified residue" description="Phosphoserine" evidence="2">
    <location>
        <position position="1137"/>
    </location>
</feature>
<feature type="modified residue" description="Phosphothreonine" evidence="2">
    <location>
        <position position="1212"/>
    </location>
</feature>
<feature type="modified residue" description="Phosphoserine" evidence="2">
    <location>
        <position position="1362"/>
    </location>
</feature>
<feature type="modified residue" description="Phosphoserine" evidence="2">
    <location>
        <position position="1374"/>
    </location>
</feature>
<feature type="helix" evidence="24">
    <location>
        <begin position="30"/>
        <end position="33"/>
    </location>
</feature>
<feature type="helix" evidence="24">
    <location>
        <begin position="43"/>
        <end position="57"/>
    </location>
</feature>
<feature type="helix" evidence="24">
    <location>
        <begin position="62"/>
        <end position="64"/>
    </location>
</feature>
<feature type="helix" evidence="24">
    <location>
        <begin position="66"/>
        <end position="82"/>
    </location>
</feature>
<feature type="helix" evidence="24">
    <location>
        <begin position="83"/>
        <end position="85"/>
    </location>
</feature>
<feature type="helix" evidence="24">
    <location>
        <begin position="89"/>
        <end position="91"/>
    </location>
</feature>
<feature type="strand" evidence="24">
    <location>
        <begin position="92"/>
        <end position="100"/>
    </location>
</feature>
<feature type="strand" evidence="24">
    <location>
        <begin position="105"/>
        <end position="111"/>
    </location>
</feature>
<feature type="turn" evidence="24">
    <location>
        <begin position="112"/>
        <end position="114"/>
    </location>
</feature>
<feature type="strand" evidence="24">
    <location>
        <begin position="117"/>
        <end position="124"/>
    </location>
</feature>
<feature type="helix" evidence="24">
    <location>
        <begin position="125"/>
        <end position="130"/>
    </location>
</feature>
<feature type="strand" evidence="24">
    <location>
        <begin position="135"/>
        <end position="137"/>
    </location>
</feature>
<feature type="helix" evidence="24">
    <location>
        <begin position="138"/>
        <end position="146"/>
    </location>
</feature>
<feature type="strand" evidence="24">
    <location>
        <begin position="155"/>
        <end position="160"/>
    </location>
</feature>
<feature type="strand" evidence="24">
    <location>
        <begin position="162"/>
        <end position="169"/>
    </location>
</feature>
<feature type="helix" evidence="24">
    <location>
        <begin position="177"/>
        <end position="183"/>
    </location>
</feature>
<feature type="helix" evidence="24">
    <location>
        <begin position="188"/>
        <end position="206"/>
    </location>
</feature>
<feature type="turn" evidence="24">
    <location>
        <begin position="207"/>
        <end position="209"/>
    </location>
</feature>
<feature type="helix" evidence="24">
    <location>
        <begin position="217"/>
        <end position="219"/>
    </location>
</feature>
<feature type="strand" evidence="24">
    <location>
        <begin position="220"/>
        <end position="222"/>
    </location>
</feature>
<feature type="strand" evidence="24">
    <location>
        <begin position="228"/>
        <end position="230"/>
    </location>
</feature>
<feature type="strand" evidence="24">
    <location>
        <begin position="241"/>
        <end position="247"/>
    </location>
</feature>
<feature type="helix" evidence="24">
    <location>
        <begin position="254"/>
        <end position="256"/>
    </location>
</feature>
<feature type="helix" evidence="24">
    <location>
        <begin position="259"/>
        <end position="263"/>
    </location>
</feature>
<feature type="helix" evidence="24">
    <location>
        <begin position="264"/>
        <end position="266"/>
    </location>
</feature>
<feature type="strand" evidence="24">
    <location>
        <begin position="269"/>
        <end position="272"/>
    </location>
</feature>
<feature type="helix" evidence="24">
    <location>
        <begin position="274"/>
        <end position="289"/>
    </location>
</feature>
<feature type="helix" evidence="24">
    <location>
        <begin position="299"/>
        <end position="307"/>
    </location>
</feature>
<feature type="helix" evidence="24">
    <location>
        <begin position="309"/>
        <end position="312"/>
    </location>
</feature>
<feature type="helix" evidence="24">
    <location>
        <begin position="323"/>
        <end position="332"/>
    </location>
</feature>
<feature type="helix" evidence="24">
    <location>
        <begin position="336"/>
        <end position="338"/>
    </location>
</feature>
<feature type="turn" evidence="24">
    <location>
        <begin position="340"/>
        <end position="343"/>
    </location>
</feature>
<feature type="helix" evidence="24">
    <location>
        <begin position="346"/>
        <end position="349"/>
    </location>
</feature>
<feature type="helix" evidence="24">
    <location>
        <begin position="352"/>
        <end position="354"/>
    </location>
</feature>
<feature type="turn" evidence="24">
    <location>
        <begin position="361"/>
        <end position="363"/>
    </location>
</feature>
<feature type="helix" evidence="24">
    <location>
        <begin position="364"/>
        <end position="366"/>
    </location>
</feature>
<feature type="helix" evidence="24">
    <location>
        <begin position="408"/>
        <end position="410"/>
    </location>
</feature>
<feature type="helix" evidence="23">
    <location>
        <begin position="979"/>
        <end position="1043"/>
    </location>
</feature>
<keyword id="KW-0002">3D-structure</keyword>
<keyword id="KW-0067">ATP-binding</keyword>
<keyword id="KW-0090">Biological rhythms</keyword>
<keyword id="KW-1003">Cell membrane</keyword>
<keyword id="KW-0175">Coiled coil</keyword>
<keyword id="KW-0963">Cytoplasm</keyword>
<keyword id="KW-0206">Cytoskeleton</keyword>
<keyword id="KW-0903">Direct protein sequencing</keyword>
<keyword id="KW-0418">Kinase</keyword>
<keyword id="KW-0460">Magnesium</keyword>
<keyword id="KW-0472">Membrane</keyword>
<keyword id="KW-0479">Metal-binding</keyword>
<keyword id="KW-0547">Nucleotide-binding</keyword>
<keyword id="KW-0539">Nucleus</keyword>
<keyword id="KW-0597">Phosphoprotein</keyword>
<keyword id="KW-1185">Reference proteome</keyword>
<keyword id="KW-0723">Serine/threonine-protein kinase</keyword>
<keyword id="KW-0808">Transferase</keyword>
<keyword id="KW-0862">Zinc</keyword>
<keyword id="KW-0863">Zinc-finger</keyword>
<proteinExistence type="evidence at protein level"/>
<sequence>MSRPPPTGKMPGAPEAVSGDGAGASRQRKLEALIRDPRSPINVESLLDGLNPLVLDLDFPALRKNKNIDNFLNRYEKIVKKIRGLQMKAEDYDVVKVIGRGAFGEVQLVRHKASQKVYAMKLLSKFEMIKRSDSAFFWEERDIMAFANSPWVVQLFCAFQDDKYLYMVMEYMPGGDLVNLMSNYDVPEKWAKFYTAEVVLALDAIHSMGLIHRDVKPDNMLLDKHGHLKLADFGTCMKMDETGMVHCDTAVGTPDYISPEVLKSQGGDGYYGRECDWWSVGVFLFEMLVGDTPFYADSLVGTYSKIMDHKNSLCFPEDAEISKHAKNLICAFLTDREVRLGRNGVEEIKQHPFFKNDQWNWDNIRETAAPVVPELSSDIDSSNFDDIEDDKGDVETFPIPKAFVGNQLPFIGFTYYRENLLLSDSPSCKENDSIQSRKNEESQEIQKKLYTLEEHLSTEIQAKEELEQKCKSVNTRLEKVAKELEEEITLRKNVESTLRQLEREKALLQHKNAEYQRKADHEADKKRNLENDVNSLKDQLEDLKKRNQNSQISTEKVNQLQRQLDETNALLRTESDTAARLRKTQAESSKQIQQLESNNRDLQDKNCLLETAKLKLEKEFINLQSVLESERRDRTHGSEIINDLQGRISGLEEDVKNGKILLAKVELEKRQLQERFTDLEKEKNNMEIDMTYQLKVIQQSLEQEETEHKATKARLADKNKIYESIEEAKSEAMKEMEKKLSEERTLKQKVENLLLEAEKRCSILDCDLKQSQQKINELLKQKDVLNEDVRNLTLKIEQETQKRCLTQNDLKMQTQQVNTLKMSEKQLKQENNHLLEMKMSLEKQNAELRKERQDADGQMKELQDQLEAEQYFSTLYKTQVRELKEECEEKTKLCKELQQKKQELQDERDSLAAQLEITLTKADSEQLARSIAEEQYSDLEKEKIMKELEIKEMMARHKQELTEKDATIASLEETNRTLTSDVANLANEKEELNNKLKEAQEQLSRLKDEEISAAAIKAQFEKQLLTERTLKTQAVNKLAEIMNRKEPVKRGNDTDVRRKEKENRKLHMELKSEREKLTQQMIKYQKELNEMQAQIAEESQIRIELQMTLDSKDSDIEQLRSQLQALHIGLDSSSIGSGPGDTEADDGFPESRLEGWLSLPVRNNTKKFGWVKKYVIVSSKKILFYDSEQDKEQSNPYMVLDIDKLFHVRPVTQTDVYRADAKEIPRIFQILYANEGESKKEQEFPVEPVGEKSNYICHKGHEFIPTLYHFPTNCEACMKPLWHMFKPPPALECRRCHIKCHKDHMDKKEEIIAPCKVYYDISSAKNLLLLANSTEEQQKWVSRLVKKIPKKPPAPDPFARSSPRTSMKIQQNQSIRRPSRQLAPNKPS</sequence>
<gene>
    <name type="primary">ROCK2</name>
</gene>
<reference key="1">
    <citation type="journal article" date="1996" name="EMBO J.">
        <title>Rho-associated kinase, a novel serine/threonine kinase, as a putative target for small GTP binding protein Rho.</title>
        <authorList>
            <person name="Matsui T."/>
            <person name="Amano M."/>
            <person name="Yamamoto T."/>
            <person name="Chihara K."/>
            <person name="Nakafuku M."/>
            <person name="Ito M."/>
            <person name="Nakano T."/>
            <person name="Okawa K."/>
            <person name="Iwamatsu A."/>
            <person name="Kaibuchi K."/>
        </authorList>
    </citation>
    <scope>NUCLEOTIDE SEQUENCE [MRNA]</scope>
    <scope>PROTEIN SEQUENCE OF 10-18; 30-44; 58-64; 133-140; 248-252; 291-305; 327-348; 350-360; 366-384; 392-400; 506-511; 527-535; 590-604; 633-652; 670-681; 829-842; 861-872; 913-921; 947-950; 979-988; 1066-1070; 1087-1091; 1114-1120; 1131-1141; 1145-1151; 1158-1166; 1182-1191; 1198-1218 AND 1318-1325</scope>
    <scope>FUNCTION</scope>
    <scope>INTERACTION WITH RHOA</scope>
    <scope>PHOSPHORYLATION</scope>
    <scope>TISSUE SPECIFICITY</scope>
    <scope>SUBCELLULAR LOCATION</scope>
</reference>
<reference key="2">
    <citation type="journal article" date="1996" name="J. Biol. Chem.">
        <title>Phosphorylation and activation of myosin by Rho-associated kinase (Rho-kinase).</title>
        <authorList>
            <person name="Amano M."/>
            <person name="Ito M."/>
            <person name="Kimura K."/>
            <person name="Fukata Y."/>
            <person name="Chihara K."/>
            <person name="Nakano T."/>
            <person name="Matsuura Y."/>
            <person name="Kaibuchi K."/>
        </authorList>
    </citation>
    <scope>FUNCTION</scope>
</reference>
<reference key="3">
    <citation type="journal article" date="1998" name="J. Biol. Chem.">
        <title>Phosphorylation of vimentin by Rho-associated kinase at a unique amino-terminal site that is specifically phosphorylated during cytokinesis.</title>
        <authorList>
            <person name="Goto H."/>
            <person name="Kosako H."/>
            <person name="Tanabe K."/>
            <person name="Yanagida M."/>
            <person name="Sakurai M."/>
            <person name="Amano M."/>
            <person name="Kaibuchi K."/>
            <person name="Inagaki M."/>
        </authorList>
    </citation>
    <scope>FUNCTION</scope>
</reference>
<reference key="4">
    <citation type="journal article" date="1998" name="J. Cell Biol.">
        <title>Rho-kinase phosphorylates COOH-terminal threonines of ezrin/radixin/moesin (ERM) proteins and regulates their head-to-tail association.</title>
        <authorList>
            <person name="Matsui T."/>
            <person name="Maeda M."/>
            <person name="Doi Y."/>
            <person name="Yonemura S."/>
            <person name="Amano M."/>
            <person name="Kaibuchi K."/>
            <person name="Tsukita S."/>
            <person name="Tsukita S."/>
        </authorList>
    </citation>
    <scope>FUNCTION</scope>
</reference>
<reference key="5">
    <citation type="journal article" date="1999" name="J. Cell Biol.">
        <title>Phosphorylation of adducin by Rho-kinase plays a crucial role in cell motility.</title>
        <authorList>
            <person name="Fukata Y."/>
            <person name="Oshiro N."/>
            <person name="Kinoshita N."/>
            <person name="Kawano Y."/>
            <person name="Matsuoka Y."/>
            <person name="Bennett V."/>
            <person name="Matsuura Y."/>
            <person name="Kaibuchi K."/>
        </authorList>
    </citation>
    <scope>FUNCTION</scope>
</reference>
<reference key="6">
    <citation type="journal article" date="2000" name="Biochem. Biophys. Res. Commun.">
        <title>Identification of calponin as a novel substrate of Rho-kinase.</title>
        <authorList>
            <person name="Kaneko T."/>
            <person name="Amano M."/>
            <person name="Maeda A."/>
            <person name="Goto H."/>
            <person name="Takahashi K."/>
            <person name="Ito M."/>
            <person name="Kaibuchi K."/>
        </authorList>
    </citation>
    <scope>FUNCTION</scope>
</reference>
<reference key="7">
    <citation type="journal article" date="2000" name="J. Biol. Chem.">
        <title>Phosphorylation of collapsin response mediator protein-2 by Rho-kinase. Evidence for two separate signaling pathways for growth cone collapse.</title>
        <authorList>
            <person name="Arimura N."/>
            <person name="Inagaki N."/>
            <person name="Chihara K."/>
            <person name="Menager C."/>
            <person name="Nakamura N."/>
            <person name="Amano M."/>
            <person name="Iwamatsu A."/>
            <person name="Goshima Y."/>
            <person name="Kaibuchi K."/>
        </authorList>
    </citation>
    <scope>FUNCTION</scope>
</reference>
<reference key="8">
    <citation type="journal article" date="2003" name="J. Biol. Chem.">
        <title>Parallel coiled-coil association of the RhoA-binding domain in Rho-kinase.</title>
        <authorList>
            <person name="Shimizu T."/>
            <person name="Ihara K."/>
            <person name="Maesaki R."/>
            <person name="Amano M."/>
            <person name="Kaibuchi K."/>
            <person name="Hakoshima T."/>
        </authorList>
    </citation>
    <scope>X-RAY CRYSTALLOGRAPHY (1.8 ANGSTROMS) OF 979-1047 IN COMPLEX WITH RHOA</scope>
    <scope>HOMODIMERIZATION</scope>
</reference>